<proteinExistence type="inferred from homology"/>
<reference key="1">
    <citation type="journal article" date="2003" name="Nature">
        <title>Genome sequence of Bacillus cereus and comparative analysis with Bacillus anthracis.</title>
        <authorList>
            <person name="Ivanova N."/>
            <person name="Sorokin A."/>
            <person name="Anderson I."/>
            <person name="Galleron N."/>
            <person name="Candelon B."/>
            <person name="Kapatral V."/>
            <person name="Bhattacharyya A."/>
            <person name="Reznik G."/>
            <person name="Mikhailova N."/>
            <person name="Lapidus A."/>
            <person name="Chu L."/>
            <person name="Mazur M."/>
            <person name="Goltsman E."/>
            <person name="Larsen N."/>
            <person name="D'Souza M."/>
            <person name="Walunas T."/>
            <person name="Grechkin Y."/>
            <person name="Pusch G."/>
            <person name="Haselkorn R."/>
            <person name="Fonstein M."/>
            <person name="Ehrlich S.D."/>
            <person name="Overbeek R."/>
            <person name="Kyrpides N.C."/>
        </authorList>
    </citation>
    <scope>NUCLEOTIDE SEQUENCE [LARGE SCALE GENOMIC DNA]</scope>
    <source>
        <strain>ATCC 14579 / DSM 31 / CCUG 7414 / JCM 2152 / NBRC 15305 / NCIMB 9373 / NCTC 2599 / NRRL B-3711</strain>
    </source>
</reference>
<dbReference type="EC" id="3.4.21.92" evidence="1"/>
<dbReference type="EMBL" id="AE016877">
    <property type="protein sequence ID" value="AAP12017.1"/>
    <property type="molecule type" value="Genomic_DNA"/>
</dbReference>
<dbReference type="RefSeq" id="NP_834816.1">
    <property type="nucleotide sequence ID" value="NC_004722.1"/>
</dbReference>
<dbReference type="SMR" id="Q815J6"/>
<dbReference type="STRING" id="226900.BC_5152"/>
<dbReference type="MEROPS" id="S14.001"/>
<dbReference type="MetOSite" id="Q815J6"/>
<dbReference type="KEGG" id="bce:BC5152"/>
<dbReference type="PATRIC" id="fig|226900.8.peg.5310"/>
<dbReference type="HOGENOM" id="CLU_058707_3_2_9"/>
<dbReference type="OrthoDB" id="9802800at2"/>
<dbReference type="Proteomes" id="UP000001417">
    <property type="component" value="Chromosome"/>
</dbReference>
<dbReference type="GO" id="GO:0005737">
    <property type="term" value="C:cytoplasm"/>
    <property type="evidence" value="ECO:0007669"/>
    <property type="project" value="UniProtKB-SubCell"/>
</dbReference>
<dbReference type="GO" id="GO:0009368">
    <property type="term" value="C:endopeptidase Clp complex"/>
    <property type="evidence" value="ECO:0000318"/>
    <property type="project" value="GO_Central"/>
</dbReference>
<dbReference type="GO" id="GO:0004176">
    <property type="term" value="F:ATP-dependent peptidase activity"/>
    <property type="evidence" value="ECO:0000318"/>
    <property type="project" value="GO_Central"/>
</dbReference>
<dbReference type="GO" id="GO:0051117">
    <property type="term" value="F:ATPase binding"/>
    <property type="evidence" value="ECO:0000318"/>
    <property type="project" value="GO_Central"/>
</dbReference>
<dbReference type="GO" id="GO:0004252">
    <property type="term" value="F:serine-type endopeptidase activity"/>
    <property type="evidence" value="ECO:0000318"/>
    <property type="project" value="GO_Central"/>
</dbReference>
<dbReference type="GO" id="GO:0006515">
    <property type="term" value="P:protein quality control for misfolded or incompletely synthesized proteins"/>
    <property type="evidence" value="ECO:0000318"/>
    <property type="project" value="GO_Central"/>
</dbReference>
<dbReference type="CDD" id="cd07017">
    <property type="entry name" value="S14_ClpP_2"/>
    <property type="match status" value="1"/>
</dbReference>
<dbReference type="FunFam" id="3.90.226.10:FF:000001">
    <property type="entry name" value="ATP-dependent Clp protease proteolytic subunit"/>
    <property type="match status" value="1"/>
</dbReference>
<dbReference type="Gene3D" id="3.90.226.10">
    <property type="entry name" value="2-enoyl-CoA Hydratase, Chain A, domain 1"/>
    <property type="match status" value="1"/>
</dbReference>
<dbReference type="HAMAP" id="MF_00444">
    <property type="entry name" value="ClpP"/>
    <property type="match status" value="1"/>
</dbReference>
<dbReference type="InterPro" id="IPR001907">
    <property type="entry name" value="ClpP"/>
</dbReference>
<dbReference type="InterPro" id="IPR029045">
    <property type="entry name" value="ClpP/crotonase-like_dom_sf"/>
</dbReference>
<dbReference type="InterPro" id="IPR023562">
    <property type="entry name" value="ClpP/TepA"/>
</dbReference>
<dbReference type="InterPro" id="IPR033135">
    <property type="entry name" value="ClpP_His_AS"/>
</dbReference>
<dbReference type="InterPro" id="IPR018215">
    <property type="entry name" value="ClpP_Ser_AS"/>
</dbReference>
<dbReference type="NCBIfam" id="TIGR00493">
    <property type="entry name" value="clpP"/>
    <property type="match status" value="1"/>
</dbReference>
<dbReference type="NCBIfam" id="NF001368">
    <property type="entry name" value="PRK00277.1"/>
    <property type="match status" value="1"/>
</dbReference>
<dbReference type="NCBIfam" id="NF009205">
    <property type="entry name" value="PRK12553.1"/>
    <property type="match status" value="1"/>
</dbReference>
<dbReference type="PANTHER" id="PTHR10381">
    <property type="entry name" value="ATP-DEPENDENT CLP PROTEASE PROTEOLYTIC SUBUNIT"/>
    <property type="match status" value="1"/>
</dbReference>
<dbReference type="PANTHER" id="PTHR10381:SF70">
    <property type="entry name" value="ATP-DEPENDENT CLP PROTEASE PROTEOLYTIC SUBUNIT"/>
    <property type="match status" value="1"/>
</dbReference>
<dbReference type="Pfam" id="PF00574">
    <property type="entry name" value="CLP_protease"/>
    <property type="match status" value="1"/>
</dbReference>
<dbReference type="PRINTS" id="PR00127">
    <property type="entry name" value="CLPPROTEASEP"/>
</dbReference>
<dbReference type="SUPFAM" id="SSF52096">
    <property type="entry name" value="ClpP/crotonase"/>
    <property type="match status" value="1"/>
</dbReference>
<dbReference type="PROSITE" id="PS00382">
    <property type="entry name" value="CLP_PROTEASE_HIS"/>
    <property type="match status" value="1"/>
</dbReference>
<dbReference type="PROSITE" id="PS00381">
    <property type="entry name" value="CLP_PROTEASE_SER"/>
    <property type="match status" value="1"/>
</dbReference>
<sequence length="193" mass="21420">MNLIPTVIEQTNRGERAYDIYSRLLKDRIIMLGSAIDDNVANSIVSQLLFLESQDPEKDIHIYINSPGGSITAGMAIYDTMQFIKPQVSTICIGMAASMGAFLLAAGEKGKRYALPNSEVMIHQPLGGAQGQATEIEIAAKRILFLREKLNQILADRTGQPLEVLQRDTDRDNFMTAEKALEYGLIDKIFTNR</sequence>
<protein>
    <recommendedName>
        <fullName evidence="1">ATP-dependent Clp protease proteolytic subunit 2</fullName>
        <ecNumber evidence="1">3.4.21.92</ecNumber>
    </recommendedName>
    <alternativeName>
        <fullName evidence="1">Endopeptidase Clp 2</fullName>
    </alternativeName>
</protein>
<keyword id="KW-0963">Cytoplasm</keyword>
<keyword id="KW-0378">Hydrolase</keyword>
<keyword id="KW-0645">Protease</keyword>
<keyword id="KW-1185">Reference proteome</keyword>
<keyword id="KW-0720">Serine protease</keyword>
<feature type="chain" id="PRO_0000179489" description="ATP-dependent Clp protease proteolytic subunit 2">
    <location>
        <begin position="1"/>
        <end position="193"/>
    </location>
</feature>
<feature type="active site" description="Nucleophile" evidence="1">
    <location>
        <position position="98"/>
    </location>
</feature>
<feature type="active site" evidence="1">
    <location>
        <position position="123"/>
    </location>
</feature>
<organism>
    <name type="scientific">Bacillus cereus (strain ATCC 14579 / DSM 31 / CCUG 7414 / JCM 2152 / NBRC 15305 / NCIMB 9373 / NCTC 2599 / NRRL B-3711)</name>
    <dbReference type="NCBI Taxonomy" id="226900"/>
    <lineage>
        <taxon>Bacteria</taxon>
        <taxon>Bacillati</taxon>
        <taxon>Bacillota</taxon>
        <taxon>Bacilli</taxon>
        <taxon>Bacillales</taxon>
        <taxon>Bacillaceae</taxon>
        <taxon>Bacillus</taxon>
        <taxon>Bacillus cereus group</taxon>
    </lineage>
</organism>
<accession>Q815J6</accession>
<comment type="function">
    <text evidence="1">Cleaves peptides in various proteins in a process that requires ATP hydrolysis. Has a chymotrypsin-like activity. Plays a major role in the degradation of misfolded proteins.</text>
</comment>
<comment type="catalytic activity">
    <reaction evidence="1">
        <text>Hydrolysis of proteins to small peptides in the presence of ATP and magnesium. alpha-casein is the usual test substrate. In the absence of ATP, only oligopeptides shorter than five residues are hydrolyzed (such as succinyl-Leu-Tyr-|-NHMec, and Leu-Tyr-Leu-|-Tyr-Trp, in which cleavage of the -Tyr-|-Leu- and -Tyr-|-Trp bonds also occurs).</text>
        <dbReference type="EC" id="3.4.21.92"/>
    </reaction>
</comment>
<comment type="subunit">
    <text evidence="1">Fourteen ClpP subunits assemble into 2 heptameric rings which stack back to back to give a disk-like structure with a central cavity, resembling the structure of eukaryotic proteasomes.</text>
</comment>
<comment type="subcellular location">
    <subcellularLocation>
        <location evidence="1">Cytoplasm</location>
    </subcellularLocation>
</comment>
<comment type="similarity">
    <text evidence="1">Belongs to the peptidase S14 family.</text>
</comment>
<name>CLPP2_BACCR</name>
<evidence type="ECO:0000255" key="1">
    <source>
        <dbReference type="HAMAP-Rule" id="MF_00444"/>
    </source>
</evidence>
<gene>
    <name evidence="1" type="primary">clpP2</name>
    <name type="ordered locus">BC_5152</name>
</gene>